<proteinExistence type="inferred from homology"/>
<comment type="function">
    <text evidence="1">Nucleoside triphosphate pyrophosphatase that hydrolyzes dTTP and UTP. May have a dual role in cell division arrest and in preventing the incorporation of modified nucleotides into cellular nucleic acids.</text>
</comment>
<comment type="catalytic activity">
    <reaction evidence="1">
        <text>dTTP + H2O = dTMP + diphosphate + H(+)</text>
        <dbReference type="Rhea" id="RHEA:28534"/>
        <dbReference type="ChEBI" id="CHEBI:15377"/>
        <dbReference type="ChEBI" id="CHEBI:15378"/>
        <dbReference type="ChEBI" id="CHEBI:33019"/>
        <dbReference type="ChEBI" id="CHEBI:37568"/>
        <dbReference type="ChEBI" id="CHEBI:63528"/>
        <dbReference type="EC" id="3.6.1.9"/>
    </reaction>
</comment>
<comment type="catalytic activity">
    <reaction evidence="1">
        <text>UTP + H2O = UMP + diphosphate + H(+)</text>
        <dbReference type="Rhea" id="RHEA:29395"/>
        <dbReference type="ChEBI" id="CHEBI:15377"/>
        <dbReference type="ChEBI" id="CHEBI:15378"/>
        <dbReference type="ChEBI" id="CHEBI:33019"/>
        <dbReference type="ChEBI" id="CHEBI:46398"/>
        <dbReference type="ChEBI" id="CHEBI:57865"/>
        <dbReference type="EC" id="3.6.1.9"/>
    </reaction>
</comment>
<comment type="cofactor">
    <cofactor evidence="1">
        <name>a divalent metal cation</name>
        <dbReference type="ChEBI" id="CHEBI:60240"/>
    </cofactor>
</comment>
<comment type="subcellular location">
    <subcellularLocation>
        <location evidence="1">Cytoplasm</location>
    </subcellularLocation>
</comment>
<comment type="similarity">
    <text evidence="1">Belongs to the Maf family. YhdE subfamily.</text>
</comment>
<protein>
    <recommendedName>
        <fullName evidence="1">dTTP/UTP pyrophosphatase</fullName>
        <shortName evidence="1">dTTPase/UTPase</shortName>
        <ecNumber evidence="1">3.6.1.9</ecNumber>
    </recommendedName>
    <alternativeName>
        <fullName evidence="1">Nucleoside triphosphate pyrophosphatase</fullName>
    </alternativeName>
    <alternativeName>
        <fullName evidence="1">Nucleotide pyrophosphatase</fullName>
        <shortName evidence="1">Nucleotide PPase</shortName>
    </alternativeName>
</protein>
<gene>
    <name type="ordered locus">DSY3181</name>
</gene>
<evidence type="ECO:0000255" key="1">
    <source>
        <dbReference type="HAMAP-Rule" id="MF_00528"/>
    </source>
</evidence>
<organism>
    <name type="scientific">Desulfitobacterium hafniense (strain Y51)</name>
    <dbReference type="NCBI Taxonomy" id="138119"/>
    <lineage>
        <taxon>Bacteria</taxon>
        <taxon>Bacillati</taxon>
        <taxon>Bacillota</taxon>
        <taxon>Clostridia</taxon>
        <taxon>Eubacteriales</taxon>
        <taxon>Desulfitobacteriaceae</taxon>
        <taxon>Desulfitobacterium</taxon>
    </lineage>
</organism>
<name>NTPPA_DESHY</name>
<keyword id="KW-0963">Cytoplasm</keyword>
<keyword id="KW-0378">Hydrolase</keyword>
<keyword id="KW-0546">Nucleotide metabolism</keyword>
<keyword id="KW-1185">Reference proteome</keyword>
<feature type="chain" id="PRO_0000267298" description="dTTP/UTP pyrophosphatase">
    <location>
        <begin position="1"/>
        <end position="222"/>
    </location>
</feature>
<feature type="active site" description="Proton acceptor" evidence="1">
    <location>
        <position position="83"/>
    </location>
</feature>
<feature type="site" description="Important for substrate specificity" evidence="1">
    <location>
        <position position="20"/>
    </location>
</feature>
<feature type="site" description="Important for substrate specificity" evidence="1">
    <location>
        <position position="84"/>
    </location>
</feature>
<feature type="site" description="Important for substrate specificity" evidence="1">
    <location>
        <position position="167"/>
    </location>
</feature>
<sequence>MVTIWLGSGRMLVLASASPRRAMLLEAEGFSFIRVEADVSEVLPQGISPESAVKGLALRKAQAGLNRWLNHGGSREDIILGADTIVVLNQQILGKPRDEEEAEAMLTALSGQTHYVYTGVALVNGAGRQECGAVCTAVFFRSLTHEEILEYIATGEPVDKAGAYGIQGLGGHLVDHYEGSLSNVIGLPMEYVKERLSVWGMGLGDIALHEVKDGLPSVKGST</sequence>
<dbReference type="EC" id="3.6.1.9" evidence="1"/>
<dbReference type="EMBL" id="AP008230">
    <property type="protein sequence ID" value="BAE84970.1"/>
    <property type="molecule type" value="Genomic_DNA"/>
</dbReference>
<dbReference type="SMR" id="Q24SM2"/>
<dbReference type="STRING" id="138119.DSY3181"/>
<dbReference type="KEGG" id="dsy:DSY3181"/>
<dbReference type="eggNOG" id="COG0424">
    <property type="taxonomic scope" value="Bacteria"/>
</dbReference>
<dbReference type="HOGENOM" id="CLU_040416_0_0_9"/>
<dbReference type="Proteomes" id="UP000001946">
    <property type="component" value="Chromosome"/>
</dbReference>
<dbReference type="GO" id="GO:0005737">
    <property type="term" value="C:cytoplasm"/>
    <property type="evidence" value="ECO:0007669"/>
    <property type="project" value="UniProtKB-SubCell"/>
</dbReference>
<dbReference type="GO" id="GO:0036218">
    <property type="term" value="F:dTTP diphosphatase activity"/>
    <property type="evidence" value="ECO:0007669"/>
    <property type="project" value="RHEA"/>
</dbReference>
<dbReference type="GO" id="GO:0036221">
    <property type="term" value="F:UTP diphosphatase activity"/>
    <property type="evidence" value="ECO:0007669"/>
    <property type="project" value="RHEA"/>
</dbReference>
<dbReference type="GO" id="GO:0009117">
    <property type="term" value="P:nucleotide metabolic process"/>
    <property type="evidence" value="ECO:0007669"/>
    <property type="project" value="UniProtKB-KW"/>
</dbReference>
<dbReference type="CDD" id="cd00555">
    <property type="entry name" value="Maf"/>
    <property type="match status" value="1"/>
</dbReference>
<dbReference type="Gene3D" id="3.90.950.10">
    <property type="match status" value="1"/>
</dbReference>
<dbReference type="HAMAP" id="MF_00528">
    <property type="entry name" value="Maf"/>
    <property type="match status" value="1"/>
</dbReference>
<dbReference type="InterPro" id="IPR029001">
    <property type="entry name" value="ITPase-like_fam"/>
</dbReference>
<dbReference type="InterPro" id="IPR003697">
    <property type="entry name" value="Maf-like"/>
</dbReference>
<dbReference type="NCBIfam" id="TIGR00172">
    <property type="entry name" value="maf"/>
    <property type="match status" value="1"/>
</dbReference>
<dbReference type="PANTHER" id="PTHR43213">
    <property type="entry name" value="BIFUNCTIONAL DTTP/UTP PYROPHOSPHATASE/METHYLTRANSFERASE PROTEIN-RELATED"/>
    <property type="match status" value="1"/>
</dbReference>
<dbReference type="PANTHER" id="PTHR43213:SF5">
    <property type="entry name" value="BIFUNCTIONAL DTTP_UTP PYROPHOSPHATASE_METHYLTRANSFERASE PROTEIN-RELATED"/>
    <property type="match status" value="1"/>
</dbReference>
<dbReference type="Pfam" id="PF02545">
    <property type="entry name" value="Maf"/>
    <property type="match status" value="1"/>
</dbReference>
<dbReference type="PIRSF" id="PIRSF006305">
    <property type="entry name" value="Maf"/>
    <property type="match status" value="1"/>
</dbReference>
<dbReference type="SUPFAM" id="SSF52972">
    <property type="entry name" value="ITPase-like"/>
    <property type="match status" value="1"/>
</dbReference>
<accession>Q24SM2</accession>
<reference key="1">
    <citation type="journal article" date="2006" name="J. Bacteriol.">
        <title>Complete genome sequence of the dehalorespiring bacterium Desulfitobacterium hafniense Y51 and comparison with Dehalococcoides ethenogenes 195.</title>
        <authorList>
            <person name="Nonaka H."/>
            <person name="Keresztes G."/>
            <person name="Shinoda Y."/>
            <person name="Ikenaga Y."/>
            <person name="Abe M."/>
            <person name="Naito K."/>
            <person name="Inatomi K."/>
            <person name="Furukawa K."/>
            <person name="Inui M."/>
            <person name="Yukawa H."/>
        </authorList>
    </citation>
    <scope>NUCLEOTIDE SEQUENCE [LARGE SCALE GENOMIC DNA]</scope>
    <source>
        <strain>Y51</strain>
    </source>
</reference>